<keyword id="KW-0158">Chromosome</keyword>
<keyword id="KW-0963">Cytoplasm</keyword>
<keyword id="KW-0238">DNA-binding</keyword>
<keyword id="KW-0460">Magnesium</keyword>
<keyword id="KW-0479">Metal-binding</keyword>
<keyword id="KW-0548">Nucleotidyltransferase</keyword>
<keyword id="KW-0539">Nucleus</keyword>
<keyword id="KW-0597">Phosphoprotein</keyword>
<keyword id="KW-1185">Reference proteome</keyword>
<keyword id="KW-0687">Ribonucleoprotein</keyword>
<keyword id="KW-0695">RNA-directed DNA polymerase</keyword>
<keyword id="KW-0779">Telomere</keyword>
<keyword id="KW-0808">Transferase</keyword>
<keyword id="KW-0832">Ubl conjugation</keyword>
<name>TERT_BOVIN</name>
<gene>
    <name type="primary">TERT</name>
</gene>
<accession>Q27ID4</accession>
<evidence type="ECO:0000250" key="1"/>
<evidence type="ECO:0000250" key="2">
    <source>
        <dbReference type="UniProtKB" id="O14746"/>
    </source>
</evidence>
<evidence type="ECO:0000250" key="3">
    <source>
        <dbReference type="UniProtKB" id="O70372"/>
    </source>
</evidence>
<evidence type="ECO:0000250" key="4">
    <source>
        <dbReference type="UniProtKB" id="Q4KTA7"/>
    </source>
</evidence>
<evidence type="ECO:0000255" key="5">
    <source>
        <dbReference type="PROSITE-ProRule" id="PRU00405"/>
    </source>
</evidence>
<evidence type="ECO:0000256" key="6">
    <source>
        <dbReference type="SAM" id="MobiDB-lite"/>
    </source>
</evidence>
<evidence type="ECO:0000305" key="7"/>
<organism>
    <name type="scientific">Bos taurus</name>
    <name type="common">Bovine</name>
    <dbReference type="NCBI Taxonomy" id="9913"/>
    <lineage>
        <taxon>Eukaryota</taxon>
        <taxon>Metazoa</taxon>
        <taxon>Chordata</taxon>
        <taxon>Craniata</taxon>
        <taxon>Vertebrata</taxon>
        <taxon>Euteleostomi</taxon>
        <taxon>Mammalia</taxon>
        <taxon>Eutheria</taxon>
        <taxon>Laurasiatheria</taxon>
        <taxon>Artiodactyla</taxon>
        <taxon>Ruminantia</taxon>
        <taxon>Pecora</taxon>
        <taxon>Bovidae</taxon>
        <taxon>Bovinae</taxon>
        <taxon>Bos</taxon>
    </lineage>
</organism>
<protein>
    <recommendedName>
        <fullName>Telomerase reverse transcriptase</fullName>
        <ecNumber>2.7.7.49</ecNumber>
    </recommendedName>
    <alternativeName>
        <fullName>Telomerase catalytic subunit</fullName>
    </alternativeName>
</protein>
<feature type="chain" id="PRO_0000245166" description="Telomerase reverse transcriptase">
    <location>
        <begin position="1"/>
        <end position="1125"/>
    </location>
</feature>
<feature type="domain" description="Reverse transcriptase" evidence="5">
    <location>
        <begin position="598"/>
        <end position="928"/>
    </location>
</feature>
<feature type="region of interest" description="RNA-interacting domain 1" evidence="1">
    <location>
        <begin position="1"/>
        <end position="234"/>
    </location>
</feature>
<feature type="region of interest" description="GQ motif" evidence="1">
    <location>
        <begin position="58"/>
        <end position="199"/>
    </location>
</feature>
<feature type="region of interest" description="Required for regulating specificity for telomeric DNA and for processivity for primer elongation" evidence="1">
    <location>
        <begin position="137"/>
        <end position="141"/>
    </location>
</feature>
<feature type="region of interest" description="Disordered" evidence="6">
    <location>
        <begin position="186"/>
        <end position="308"/>
    </location>
</feature>
<feature type="region of interest" description="Linker" evidence="1">
    <location>
        <begin position="235"/>
        <end position="312"/>
    </location>
</feature>
<feature type="region of interest" description="Required for oligomerization" evidence="1">
    <location>
        <begin position="290"/>
        <end position="531"/>
    </location>
</feature>
<feature type="region of interest" description="RNA-interacting domain 2" evidence="1">
    <location>
        <begin position="313"/>
        <end position="543"/>
    </location>
</feature>
<feature type="region of interest" description="QFP motif" evidence="1">
    <location>
        <begin position="364"/>
        <end position="514"/>
    </location>
</feature>
<feature type="region of interest" description="CP motif" evidence="1">
    <location>
        <begin position="385"/>
        <end position="405"/>
    </location>
</feature>
<feature type="region of interest" description="Required for oligomerization" evidence="1">
    <location>
        <begin position="907"/>
        <end position="921"/>
    </location>
</feature>
<feature type="region of interest" description="Primer grip sequence" evidence="1">
    <location>
        <begin position="923"/>
        <end position="927"/>
    </location>
</feature>
<feature type="region of interest" description="CTE" evidence="1">
    <location>
        <begin position="929"/>
        <end position="1125"/>
    </location>
</feature>
<feature type="short sequence motif" description="Bipartite nuclear localization signal" evidence="1">
    <location>
        <begin position="226"/>
        <end position="244"/>
    </location>
</feature>
<feature type="short sequence motif" description="TFLY; involved in RNA binding" evidence="4">
    <location>
        <begin position="316"/>
        <end position="321"/>
    </location>
</feature>
<feature type="compositionally biased region" description="Basic residues" evidence="6">
    <location>
        <begin position="224"/>
        <end position="243"/>
    </location>
</feature>
<feature type="compositionally biased region" description="Basic and acidic residues" evidence="6">
    <location>
        <begin position="244"/>
        <end position="253"/>
    </location>
</feature>
<feature type="compositionally biased region" description="Basic and acidic residues" evidence="6">
    <location>
        <begin position="269"/>
        <end position="279"/>
    </location>
</feature>
<feature type="binding site" evidence="5">
    <location>
        <position position="705"/>
    </location>
    <ligand>
        <name>Mg(2+)</name>
        <dbReference type="ChEBI" id="CHEBI:18420"/>
        <note>catalytic</note>
    </ligand>
</feature>
<feature type="binding site" evidence="5">
    <location>
        <position position="861"/>
    </location>
    <ligand>
        <name>Mg(2+)</name>
        <dbReference type="ChEBI" id="CHEBI:18420"/>
        <note>catalytic</note>
    </ligand>
</feature>
<feature type="binding site" evidence="5">
    <location>
        <position position="862"/>
    </location>
    <ligand>
        <name>Mg(2+)</name>
        <dbReference type="ChEBI" id="CHEBI:18420"/>
        <note>catalytic</note>
    </ligand>
</feature>
<feature type="site" description="Required for optimal binding of telomeric ssDNA and incorporation of nucleotides at the second position of the template" evidence="1">
    <location>
        <position position="169"/>
    </location>
</feature>
<feature type="site" description="Required for nucleotide incorporation and primer extension rate" evidence="1">
    <location>
        <position position="860"/>
    </location>
</feature>
<feature type="modified residue" description="Phosphoserine; by PKB/AKT1" evidence="2">
    <location>
        <position position="231"/>
    </location>
</feature>
<feature type="modified residue" description="Phosphoserine; by DYRK2" evidence="2">
    <location>
        <position position="450"/>
    </location>
</feature>
<feature type="modified residue" description="Phosphotyrosine; by SRC-type Tyr-kinases" evidence="2">
    <location>
        <position position="700"/>
    </location>
</feature>
<comment type="function">
    <text evidence="1">Telomerase is a ribonucleoprotein enzyme essential for the replication of chromosome termini in most eukaryotes. Active in progenitor and cancer cells. Inactive, or very low activity, in normal somatic cells. Catalytic component of the teleromerase holoenzyme complex whose main activity is the elongation of telomeres by acting as a reverse transcriptase that adds simple sequence repeats to chromosome ends by copying a template sequence within the RNA component of the enzyme. Catalyzes the RNA-dependent extension of 3'-chromosomal termini with the 6-nucleotide telomeric repeat unit, 5'-TTAGGG-3'. The catalytic cycle involves primer binding, primer extension and release of product once the template boundary has been reached or nascent product translocation followed by further extension. More active on substrates containing 2 or 3 telomeric repeats. Telomerase activity is regulated by a number of factors including telomerase complex-associated proteins, chaperones and polypeptide modifiers. Modulates Wnt signaling. Plays important roles in aging and antiapoptosis (By similarity).</text>
</comment>
<comment type="catalytic activity">
    <reaction evidence="5">
        <text>DNA(n) + a 2'-deoxyribonucleoside 5'-triphosphate = DNA(n+1) + diphosphate</text>
        <dbReference type="Rhea" id="RHEA:22508"/>
        <dbReference type="Rhea" id="RHEA-COMP:17339"/>
        <dbReference type="Rhea" id="RHEA-COMP:17340"/>
        <dbReference type="ChEBI" id="CHEBI:33019"/>
        <dbReference type="ChEBI" id="CHEBI:61560"/>
        <dbReference type="ChEBI" id="CHEBI:173112"/>
        <dbReference type="EC" id="2.7.7.49"/>
    </reaction>
</comment>
<comment type="subunit">
    <text evidence="2 3">Catalytic component of the telomerase holoenzyme complex composed of one molecule of TERT, one molecule of WRAP53/TCAB1, two molecules of H/ACA ribonucleoprotein complex subunits DKC1, NOP10, NHP2 and GAR1, and a telomerase RNA template component (TERC). The telomerase holoenzyme complex is associated with TEP1, SMG6/EST1A and POT1. The molecular chaperone HSP90/P23 complex is required for correct assembly and stabilization of the active telomerase. Interacts directly with HSP90A and PTGES3. Interacts with HSPA1A; the interaction occurs in the absence of TERC and dissociates once the complex has formed. Interacts with RAN; the interaction promotes nuclear export of TERT. Interacts with XPO1. Interacts with PTPN11; the interaction retains TERT in the nucleus. Interacts with NCL (via RRM1 and C-terminal RRM4/Arg/Gly-rich domains); the interaction is important for nucleolar localization of TERT (By similarity). Interacts with SMARCA4 (via the bromodomain); the interaction regulates Wnt-mediated signaling (By similarity). Interacts with MCRS1 (isoform MCRS2); the interaction inhibits in vitro telomerase activity (By similarity). Interacts with PIF1; the interaction has no effect on the elongation activity of TERT (By similarity). Interacts with PML; the interaction recruits TERT to PML bodies and inhibits telomerase activity (By similarity). Interacts with GNL3L (By similarity). Interacts with isoform 1 and isoform 2 of NVL (By similarity). Interacts with DHX36 (By similarity). Interacts with ATF7 (By similarity).</text>
</comment>
<comment type="subcellular location">
    <subcellularLocation>
        <location evidence="2">Nucleus</location>
        <location evidence="2">Nucleolus</location>
    </subcellularLocation>
    <subcellularLocation>
        <location evidence="1">Nucleus</location>
        <location evidence="1">Nucleoplasm</location>
    </subcellularLocation>
    <subcellularLocation>
        <location>Nucleus</location>
    </subcellularLocation>
    <subcellularLocation>
        <location>Chromosome</location>
        <location>Telomere</location>
    </subcellularLocation>
    <subcellularLocation>
        <location evidence="1">Cytoplasm</location>
    </subcellularLocation>
    <subcellularLocation>
        <location evidence="1">Nucleus</location>
        <location evidence="1">PML body</location>
    </subcellularLocation>
    <text evidence="1">Shuttling between nuclear and cytoplasm depends on cell cycle, phosphorylation states, transformation and DNA damage. Diffuse localization in the nucleoplasm. Enriched in nucleoli of certain cell types. Translocated to the cytoplasm via nuclear pores in a CRM1/RAN-dependent manner involving oxidative stress-mediated phosphorylation at Tyr-700. Dephosphorylation at this site by SHP2 retains TERT in the nucleus. Translocated to the nucleus by phosphorylation by AKT (By similarity).</text>
</comment>
<comment type="domain">
    <text evidence="1">The primer grip sequence in the RT domain is required for telomerase activity and for stable association with short telomeric primers.</text>
</comment>
<comment type="domain">
    <text evidence="1">The RNA-interacting domain 1 (RD1)/N-terminal extension (NTE) is required for interaction with the pseudoknot-template domain of each of TERC dimers. It contains anchor sites that bind primer nucleotides upstream of the RNA-DNA hybrid and is thus an essential determinant of repeat addition processivity (By similarity).</text>
</comment>
<comment type="domain">
    <text evidence="1">The RNA-interacting domain 2 (RD2) is essential for both interaction with the CR4-CR5 domain of TERC and for DNA synthesis.</text>
</comment>
<comment type="PTM">
    <text evidence="1">Phosphorylation at Tyr-700 under oxidative stress leads to translocation of TERT to the cytoplasm and reduces its antiapoptotic activity. Dephosphorylated by SHP2/PTPN11 leading to nuclear retention. Phosphorylation at Ser-231 by the AKT pathway promotes nuclear location. Phosphorylation at the G2/M phase at Ser-450 by DYRK2 promotes ubiquitination by the EDVP complex and degradation (By similarity).</text>
</comment>
<comment type="PTM">
    <text evidence="1">Ubiquitinated by the EDVP complex, a E3 ligase complex following phosphorylation at Ser-450 by DYRK2. Ubiquitinated leads to proteasomal degradation (By similarity).</text>
</comment>
<comment type="similarity">
    <text evidence="7">Belongs to the reverse transcriptase family. Telomerase subfamily.</text>
</comment>
<proteinExistence type="inferred from homology"/>
<reference key="1">
    <citation type="submission" date="2006-03" db="EMBL/GenBank/DDBJ databases">
        <title>Cloning and expression of the reverse transcriptase component of Bos taurus telomerase.</title>
        <authorList>
            <person name="Zhao D."/>
            <person name="Du Z."/>
            <person name="Li N."/>
        </authorList>
    </citation>
    <scope>NUCLEOTIDE SEQUENCE [GENOMIC DNA]</scope>
</reference>
<sequence length="1125" mass="124447">MPRAPRCRAVRALLRASYRQVLPLAAFVRRLRPQGHRLVRRGDPAAFRALVAQCLVCVPWDAQPPPAAPSFRQVSCLKELVARVVQRLCERGARNVLAFGFTLLAGARGGPPVAFTTSVRSYLPNTVTDTLRGSGAWGLLLHRVGDDVLTHLLSRCALYLLVPPTCAYQVCGPPLYDLRAAAAAARRPTRQVGGTRAGFGLPRPASSNGGHGEAEGLLEARAQGARRRRSSARGRLPPAKRPRRGLEPGRDLEGQVARSPPRVVTPTRDAAEAKSRKGDVPGPCRLFPGGERGVGSASWRLSPSEGEPGAGACAETKRFLYCSGGGEQLRRSFLLCSLPPSLAGARTLVETIFLDSKPGPPGAPRRPRRLPARYWQMRPLFRKLLGNHARSPYGALLRAHCPLPASAPRAGPDHQKCPGVGGCPSERPAAAPEGEANSGRLVQLLRQHSSPWQVYGLLRACLRRLVPAGLWGSRHNERRFLRNVKKLLSLGKHGRLSQQELTWKMKVQDCAWLRASPGARCVPAAEHRQREAVLGRFLHWLMGAYVVELLRSFFYVTETTFQKNRLFFFRKRIWSQLQRLGVRQHLDRVRLRELSEAEVRQHQEARPALLTSRLRFVPKPGGLRPIVNVGCVEGAPAPPRDKKVQHLSSRVKTLFAVLNYERARRPGLLGASVLGMDDIHRAWRAFVLPLRARGPAPPLYFVKVDVVGAYDALPQDKLAEVIANVLQPQENTYCVRHCAMVRTARGRMRKSFKRHVSTFSDFQPYLRQLVEHLQAMGSLRDAVVIEQSCSLNEPGSSLFNLFLHLVRSHVIRIGGRSYIQCQGIPQGSILSTLLCSFCYGDMENKLFPGVQQDGVLLRLVDDFLLVTPHLTRARDFLRTLVRGVPEYGCQVNLRKTVVNFPVEPGALGGAAPLQLPAHCLFPWCGLLLDTRTLEVHGDHSSYARTSIRASLTFTQGFKPGRNMRRKLLAVLQLKCHGLFLDLQVNSLQTVFTNVYKIFLLQAYRFHACVLQLPFSQPVRSSPAFFLQVIADTASRGYALLKARNAGASLGARGAAGLFPSEAAQWLCLHAFLLKLARHRVTYSRLLGALRTARARLHRQLPGPTRAALEAAADPALTADFKTILD</sequence>
<dbReference type="EC" id="2.7.7.49"/>
<dbReference type="EMBL" id="DQ399842">
    <property type="protein sequence ID" value="ABD61652.2"/>
    <property type="molecule type" value="Genomic_DNA"/>
</dbReference>
<dbReference type="RefSeq" id="NP_001039707.1">
    <property type="nucleotide sequence ID" value="NM_001046242.1"/>
</dbReference>
<dbReference type="SMR" id="Q27ID4"/>
<dbReference type="FunCoup" id="Q27ID4">
    <property type="interactions" value="153"/>
</dbReference>
<dbReference type="STRING" id="9913.ENSBTAP00000016685"/>
<dbReference type="PaxDb" id="9913-ENSBTAP00000016685"/>
<dbReference type="GeneID" id="518884"/>
<dbReference type="KEGG" id="bta:518884"/>
<dbReference type="CTD" id="7015"/>
<dbReference type="eggNOG" id="KOG1005">
    <property type="taxonomic scope" value="Eukaryota"/>
</dbReference>
<dbReference type="InParanoid" id="Q27ID4"/>
<dbReference type="OrthoDB" id="289721at2759"/>
<dbReference type="Proteomes" id="UP000009136">
    <property type="component" value="Unplaced"/>
</dbReference>
<dbReference type="GO" id="GO:0000781">
    <property type="term" value="C:chromosome, telomeric region"/>
    <property type="evidence" value="ECO:0007669"/>
    <property type="project" value="UniProtKB-SubCell"/>
</dbReference>
<dbReference type="GO" id="GO:0005737">
    <property type="term" value="C:cytoplasm"/>
    <property type="evidence" value="ECO:0007669"/>
    <property type="project" value="UniProtKB-SubCell"/>
</dbReference>
<dbReference type="GO" id="GO:0005730">
    <property type="term" value="C:nucleolus"/>
    <property type="evidence" value="ECO:0000250"/>
    <property type="project" value="UniProtKB"/>
</dbReference>
<dbReference type="GO" id="GO:0016605">
    <property type="term" value="C:PML body"/>
    <property type="evidence" value="ECO:0007669"/>
    <property type="project" value="UniProtKB-SubCell"/>
</dbReference>
<dbReference type="GO" id="GO:0000333">
    <property type="term" value="C:telomerase catalytic core complex"/>
    <property type="evidence" value="ECO:0000318"/>
    <property type="project" value="GO_Central"/>
</dbReference>
<dbReference type="GO" id="GO:0005697">
    <property type="term" value="C:telomerase holoenzyme complex"/>
    <property type="evidence" value="ECO:0000250"/>
    <property type="project" value="UniProtKB"/>
</dbReference>
<dbReference type="GO" id="GO:0046872">
    <property type="term" value="F:metal ion binding"/>
    <property type="evidence" value="ECO:0007669"/>
    <property type="project" value="UniProtKB-KW"/>
</dbReference>
<dbReference type="GO" id="GO:0003720">
    <property type="term" value="F:telomerase activity"/>
    <property type="evidence" value="ECO:0000250"/>
    <property type="project" value="UniProtKB"/>
</dbReference>
<dbReference type="GO" id="GO:0070034">
    <property type="term" value="F:telomerase RNA binding"/>
    <property type="evidence" value="ECO:0000318"/>
    <property type="project" value="GO_Central"/>
</dbReference>
<dbReference type="GO" id="GO:0042162">
    <property type="term" value="F:telomeric DNA binding"/>
    <property type="evidence" value="ECO:0000318"/>
    <property type="project" value="GO_Central"/>
</dbReference>
<dbReference type="GO" id="GO:0007004">
    <property type="term" value="P:telomere maintenance via telomerase"/>
    <property type="evidence" value="ECO:0000250"/>
    <property type="project" value="UniProtKB"/>
</dbReference>
<dbReference type="CDD" id="cd01648">
    <property type="entry name" value="TERT"/>
    <property type="match status" value="1"/>
</dbReference>
<dbReference type="FunFam" id="1.10.132.70:FF:000001">
    <property type="entry name" value="Telomerase reverse transcriptase"/>
    <property type="match status" value="1"/>
</dbReference>
<dbReference type="FunFam" id="1.10.357.90:FF:000001">
    <property type="entry name" value="Telomerase reverse transcriptase"/>
    <property type="match status" value="1"/>
</dbReference>
<dbReference type="FunFam" id="3.30.70.2630:FF:000001">
    <property type="entry name" value="Telomerase reverse transcriptase"/>
    <property type="match status" value="1"/>
</dbReference>
<dbReference type="Gene3D" id="1.10.132.70">
    <property type="match status" value="1"/>
</dbReference>
<dbReference type="Gene3D" id="1.10.357.90">
    <property type="match status" value="1"/>
</dbReference>
<dbReference type="Gene3D" id="3.30.70.2630">
    <property type="match status" value="1"/>
</dbReference>
<dbReference type="InterPro" id="IPR043502">
    <property type="entry name" value="DNA/RNA_pol_sf"/>
</dbReference>
<dbReference type="InterPro" id="IPR000477">
    <property type="entry name" value="RT_dom"/>
</dbReference>
<dbReference type="InterPro" id="IPR021891">
    <property type="entry name" value="Telomerase_RBD"/>
</dbReference>
<dbReference type="InterPro" id="IPR003545">
    <property type="entry name" value="Telomerase_RT"/>
</dbReference>
<dbReference type="InterPro" id="IPR049139">
    <property type="entry name" value="TERT_C"/>
</dbReference>
<dbReference type="PANTHER" id="PTHR12066">
    <property type="entry name" value="TELOMERASE REVERSE TRANSCRIPTASE"/>
    <property type="match status" value="1"/>
</dbReference>
<dbReference type="PANTHER" id="PTHR12066:SF0">
    <property type="entry name" value="TELOMERASE REVERSE TRANSCRIPTASE"/>
    <property type="match status" value="1"/>
</dbReference>
<dbReference type="Pfam" id="PF00078">
    <property type="entry name" value="RVT_1"/>
    <property type="match status" value="1"/>
</dbReference>
<dbReference type="Pfam" id="PF12009">
    <property type="entry name" value="Telomerase_RBD"/>
    <property type="match status" value="1"/>
</dbReference>
<dbReference type="Pfam" id="PF21399">
    <property type="entry name" value="TERT_C"/>
    <property type="match status" value="1"/>
</dbReference>
<dbReference type="PRINTS" id="PR01365">
    <property type="entry name" value="TELOMERASERT"/>
</dbReference>
<dbReference type="SMART" id="SM00975">
    <property type="entry name" value="Telomerase_RBD"/>
    <property type="match status" value="1"/>
</dbReference>
<dbReference type="SUPFAM" id="SSF56672">
    <property type="entry name" value="DNA/RNA polymerases"/>
    <property type="match status" value="1"/>
</dbReference>
<dbReference type="PROSITE" id="PS50878">
    <property type="entry name" value="RT_POL"/>
    <property type="match status" value="1"/>
</dbReference>